<dbReference type="EC" id="6.3.2.2" evidence="1"/>
<dbReference type="EMBL" id="LT708304">
    <property type="protein sequence ID" value="SIT99026.1"/>
    <property type="molecule type" value="Genomic_DNA"/>
</dbReference>
<dbReference type="RefSeq" id="NP_854104.1">
    <property type="nucleotide sequence ID" value="NC_002945.3"/>
</dbReference>
<dbReference type="RefSeq" id="WP_003900145.1">
    <property type="nucleotide sequence ID" value="NC_002945.4"/>
</dbReference>
<dbReference type="SMR" id="P64694"/>
<dbReference type="PATRIC" id="fig|233413.5.peg.480"/>
<dbReference type="Proteomes" id="UP000001419">
    <property type="component" value="Chromosome"/>
</dbReference>
<dbReference type="GO" id="GO:0005524">
    <property type="term" value="F:ATP binding"/>
    <property type="evidence" value="ECO:0007669"/>
    <property type="project" value="UniProtKB-KW"/>
</dbReference>
<dbReference type="GO" id="GO:0004357">
    <property type="term" value="F:glutamate-cysteine ligase activity"/>
    <property type="evidence" value="ECO:0007669"/>
    <property type="project" value="UniProtKB-EC"/>
</dbReference>
<dbReference type="GO" id="GO:0042398">
    <property type="term" value="P:modified amino acid biosynthetic process"/>
    <property type="evidence" value="ECO:0007669"/>
    <property type="project" value="InterPro"/>
</dbReference>
<dbReference type="FunFam" id="3.30.590.20:FF:000004">
    <property type="entry name" value="Putative glutamate--cysteine ligase 2"/>
    <property type="match status" value="1"/>
</dbReference>
<dbReference type="Gene3D" id="3.30.590.20">
    <property type="match status" value="1"/>
</dbReference>
<dbReference type="HAMAP" id="MF_01609">
    <property type="entry name" value="Glu_cys_ligase_2"/>
    <property type="match status" value="1"/>
</dbReference>
<dbReference type="InterPro" id="IPR050141">
    <property type="entry name" value="GCL_type2/YbdK_subfam"/>
</dbReference>
<dbReference type="InterPro" id="IPR006336">
    <property type="entry name" value="GCS2"/>
</dbReference>
<dbReference type="InterPro" id="IPR014746">
    <property type="entry name" value="Gln_synth/guanido_kin_cat_dom"/>
</dbReference>
<dbReference type="InterPro" id="IPR011793">
    <property type="entry name" value="YbdK"/>
</dbReference>
<dbReference type="NCBIfam" id="TIGR02050">
    <property type="entry name" value="gshA_cyan_rel"/>
    <property type="match status" value="1"/>
</dbReference>
<dbReference type="NCBIfam" id="NF010042">
    <property type="entry name" value="PRK13517.1-2"/>
    <property type="match status" value="1"/>
</dbReference>
<dbReference type="NCBIfam" id="NF010043">
    <property type="entry name" value="PRK13517.1-3"/>
    <property type="match status" value="1"/>
</dbReference>
<dbReference type="NCBIfam" id="NF010044">
    <property type="entry name" value="PRK13517.1-4"/>
    <property type="match status" value="1"/>
</dbReference>
<dbReference type="PANTHER" id="PTHR36510">
    <property type="entry name" value="GLUTAMATE--CYSTEINE LIGASE 2-RELATED"/>
    <property type="match status" value="1"/>
</dbReference>
<dbReference type="PANTHER" id="PTHR36510:SF1">
    <property type="entry name" value="GLUTAMATE--CYSTEINE LIGASE 2-RELATED"/>
    <property type="match status" value="1"/>
</dbReference>
<dbReference type="Pfam" id="PF04107">
    <property type="entry name" value="GCS2"/>
    <property type="match status" value="1"/>
</dbReference>
<dbReference type="SUPFAM" id="SSF55931">
    <property type="entry name" value="Glutamine synthetase/guanido kinase"/>
    <property type="match status" value="1"/>
</dbReference>
<name>GCS2_MYCBO</name>
<reference key="1">
    <citation type="journal article" date="2003" name="Proc. Natl. Acad. Sci. U.S.A.">
        <title>The complete genome sequence of Mycobacterium bovis.</title>
        <authorList>
            <person name="Garnier T."/>
            <person name="Eiglmeier K."/>
            <person name="Camus J.-C."/>
            <person name="Medina N."/>
            <person name="Mansoor H."/>
            <person name="Pryor M."/>
            <person name="Duthoy S."/>
            <person name="Grondin S."/>
            <person name="Lacroix C."/>
            <person name="Monsempe C."/>
            <person name="Simon S."/>
            <person name="Harris B."/>
            <person name="Atkin R."/>
            <person name="Doggett J."/>
            <person name="Mayes R."/>
            <person name="Keating L."/>
            <person name="Wheeler P.R."/>
            <person name="Parkhill J."/>
            <person name="Barrell B.G."/>
            <person name="Cole S.T."/>
            <person name="Gordon S.V."/>
            <person name="Hewinson R.G."/>
        </authorList>
    </citation>
    <scope>NUCLEOTIDE SEQUENCE [LARGE SCALE GENOMIC DNA]</scope>
    <source>
        <strain>ATCC BAA-935 / AF2122/97</strain>
    </source>
</reference>
<reference key="2">
    <citation type="journal article" date="2017" name="Genome Announc.">
        <title>Updated reference genome sequence and annotation of Mycobacterium bovis AF2122/97.</title>
        <authorList>
            <person name="Malone K.M."/>
            <person name="Farrell D."/>
            <person name="Stuber T.P."/>
            <person name="Schubert O.T."/>
            <person name="Aebersold R."/>
            <person name="Robbe-Austerman S."/>
            <person name="Gordon S.V."/>
        </authorList>
    </citation>
    <scope>NUCLEOTIDE SEQUENCE [LARGE SCALE GENOMIC DNA]</scope>
    <scope>GENOME REANNOTATION</scope>
    <source>
        <strain>ATCC BAA-935 / AF2122/97</strain>
    </source>
</reference>
<feature type="chain" id="PRO_0000218206" description="Putative glutamate--cysteine ligase 2">
    <location>
        <begin position="1"/>
        <end position="376"/>
    </location>
</feature>
<protein>
    <recommendedName>
        <fullName evidence="1">Putative glutamate--cysteine ligase 2</fullName>
        <ecNumber evidence="1">6.3.2.2</ecNumber>
    </recommendedName>
    <alternativeName>
        <fullName evidence="1">Gamma-glutamylcysteine synthetase 2</fullName>
        <shortName evidence="1">GCS 2</shortName>
        <shortName evidence="1">Gamma-GCS 2</shortName>
    </alternativeName>
</protein>
<accession>P64694</accession>
<accession>A0A1R3XVW3</accession>
<accession>P96279</accession>
<accession>X2BF10</accession>
<evidence type="ECO:0000255" key="1">
    <source>
        <dbReference type="HAMAP-Rule" id="MF_01609"/>
    </source>
</evidence>
<keyword id="KW-0067">ATP-binding</keyword>
<keyword id="KW-0436">Ligase</keyword>
<keyword id="KW-0547">Nucleotide-binding</keyword>
<keyword id="KW-1185">Reference proteome</keyword>
<proteinExistence type="inferred from homology"/>
<gene>
    <name type="ordered locus">BQ2027_MB0441</name>
</gene>
<sequence>MPARRSAARIDFAGSPRPTLGVEWEFALVDSQTRDLSNEATAVIAEIGENPRVHKELLRNTVEIVSGICECTAEAMQDLRDTLGPARQIVRDRGMELFCAGTHPFARWSAQKLTDAPRYAELIKRTQWWGRQMLIWGVHVHVGIRSAHKVMPIMTSLLNYYPHLLALSASSPWWGGEDTGYASNRAMMFQQLPTAGLPFHFQRWAEFEGFVYDQKKTGIIDHMDEIRWDIRPSPHLGTLEVRICDGVSNLRELGALVALTHCLIVDLDRRLDAGETLPTMPPWHVQENKWRAARYGLDAVIILDADSNERLVTDDLADVLTRLEPVAKSLNCADELAAVSDIYRDGASYQRQLRVAQQHDGDLRAVVDALVAELVI</sequence>
<organism>
    <name type="scientific">Mycobacterium bovis (strain ATCC BAA-935 / AF2122/97)</name>
    <dbReference type="NCBI Taxonomy" id="233413"/>
    <lineage>
        <taxon>Bacteria</taxon>
        <taxon>Bacillati</taxon>
        <taxon>Actinomycetota</taxon>
        <taxon>Actinomycetes</taxon>
        <taxon>Mycobacteriales</taxon>
        <taxon>Mycobacteriaceae</taxon>
        <taxon>Mycobacterium</taxon>
        <taxon>Mycobacterium tuberculosis complex</taxon>
    </lineage>
</organism>
<comment type="function">
    <text evidence="1">ATP-dependent carboxylate-amine ligase which exhibits weak glutamate--cysteine ligase activity.</text>
</comment>
<comment type="catalytic activity">
    <reaction evidence="1">
        <text>L-cysteine + L-glutamate + ATP = gamma-L-glutamyl-L-cysteine + ADP + phosphate + H(+)</text>
        <dbReference type="Rhea" id="RHEA:13285"/>
        <dbReference type="ChEBI" id="CHEBI:15378"/>
        <dbReference type="ChEBI" id="CHEBI:29985"/>
        <dbReference type="ChEBI" id="CHEBI:30616"/>
        <dbReference type="ChEBI" id="CHEBI:35235"/>
        <dbReference type="ChEBI" id="CHEBI:43474"/>
        <dbReference type="ChEBI" id="CHEBI:58173"/>
        <dbReference type="ChEBI" id="CHEBI:456216"/>
        <dbReference type="EC" id="6.3.2.2"/>
    </reaction>
</comment>
<comment type="similarity">
    <text evidence="1">Belongs to the glutamate--cysteine ligase type 2 family. YbdK subfamily.</text>
</comment>